<feature type="chain" id="PRO_0000120474" description="Glutamate-1-semialdehyde 2,1-aminomutase">
    <location>
        <begin position="1"/>
        <end position="426"/>
    </location>
</feature>
<feature type="modified residue" description="N6-(pyridoxal phosphate)lysine" evidence="1">
    <location>
        <position position="265"/>
    </location>
</feature>
<feature type="helix" evidence="2">
    <location>
        <begin position="3"/>
        <end position="14"/>
    </location>
</feature>
<feature type="helix" evidence="2">
    <location>
        <begin position="16"/>
        <end position="18"/>
    </location>
</feature>
<feature type="helix" evidence="2">
    <location>
        <begin position="22"/>
        <end position="25"/>
    </location>
</feature>
<feature type="turn" evidence="2">
    <location>
        <begin position="26"/>
        <end position="29"/>
    </location>
</feature>
<feature type="strand" evidence="2">
    <location>
        <begin position="36"/>
        <end position="41"/>
    </location>
</feature>
<feature type="strand" evidence="2">
    <location>
        <begin position="43"/>
        <end position="46"/>
    </location>
</feature>
<feature type="strand" evidence="2">
    <location>
        <begin position="51"/>
        <end position="56"/>
    </location>
</feature>
<feature type="helix" evidence="2">
    <location>
        <begin position="57"/>
        <end position="59"/>
    </location>
</feature>
<feature type="helix" evidence="2">
    <location>
        <begin position="69"/>
        <end position="79"/>
    </location>
</feature>
<feature type="helix" evidence="2">
    <location>
        <begin position="90"/>
        <end position="102"/>
    </location>
</feature>
<feature type="strand" evidence="2">
    <location>
        <begin position="107"/>
        <end position="114"/>
    </location>
</feature>
<feature type="helix" evidence="2">
    <location>
        <begin position="115"/>
        <end position="130"/>
    </location>
</feature>
<feature type="strand" evidence="2">
    <location>
        <begin position="134"/>
        <end position="138"/>
    </location>
</feature>
<feature type="helix" evidence="2">
    <location>
        <begin position="170"/>
        <end position="173"/>
    </location>
</feature>
<feature type="strand" evidence="2">
    <location>
        <begin position="176"/>
        <end position="179"/>
    </location>
</feature>
<feature type="helix" evidence="2">
    <location>
        <begin position="184"/>
        <end position="193"/>
    </location>
</feature>
<feature type="turn" evidence="2">
    <location>
        <begin position="195"/>
        <end position="197"/>
    </location>
</feature>
<feature type="strand" evidence="2">
    <location>
        <begin position="198"/>
        <end position="203"/>
    </location>
</feature>
<feature type="strand" evidence="2">
    <location>
        <begin position="205"/>
        <end position="207"/>
    </location>
</feature>
<feature type="helix" evidence="2">
    <location>
        <begin position="219"/>
        <end position="230"/>
    </location>
</feature>
<feature type="strand" evidence="2">
    <location>
        <begin position="233"/>
        <end position="238"/>
    </location>
</feature>
<feature type="turn" evidence="2">
    <location>
        <begin position="239"/>
        <end position="244"/>
    </location>
</feature>
<feature type="helix" evidence="2">
    <location>
        <begin position="250"/>
        <end position="253"/>
    </location>
</feature>
<feature type="strand" evidence="2">
    <location>
        <begin position="259"/>
        <end position="264"/>
    </location>
</feature>
<feature type="helix" evidence="2">
    <location>
        <begin position="265"/>
        <end position="268"/>
    </location>
</feature>
<feature type="strand" evidence="2">
    <location>
        <begin position="274"/>
        <end position="278"/>
    </location>
</feature>
<feature type="helix" evidence="2">
    <location>
        <begin position="280"/>
        <end position="283"/>
    </location>
</feature>
<feature type="turn" evidence="2">
    <location>
        <begin position="287"/>
        <end position="289"/>
    </location>
</feature>
<feature type="strand" evidence="2">
    <location>
        <begin position="290"/>
        <end position="292"/>
    </location>
</feature>
<feature type="helix" evidence="2">
    <location>
        <begin position="302"/>
        <end position="315"/>
    </location>
</feature>
<feature type="helix" evidence="2">
    <location>
        <begin position="320"/>
        <end position="341"/>
    </location>
</feature>
<feature type="strand" evidence="2">
    <location>
        <begin position="347"/>
        <end position="351"/>
    </location>
</feature>
<feature type="strand" evidence="2">
    <location>
        <begin position="354"/>
        <end position="358"/>
    </location>
</feature>
<feature type="strand" evidence="2">
    <location>
        <begin position="361"/>
        <end position="363"/>
    </location>
</feature>
<feature type="helix" evidence="2">
    <location>
        <begin position="368"/>
        <end position="372"/>
    </location>
</feature>
<feature type="helix" evidence="2">
    <location>
        <begin position="376"/>
        <end position="388"/>
    </location>
</feature>
<feature type="helix" evidence="2">
    <location>
        <begin position="409"/>
        <end position="423"/>
    </location>
</feature>
<dbReference type="EC" id="5.4.3.8" evidence="1"/>
<dbReference type="EMBL" id="AL590842">
    <property type="protein sequence ID" value="CAL21978.1"/>
    <property type="molecule type" value="Genomic_DNA"/>
</dbReference>
<dbReference type="EMBL" id="AE009952">
    <property type="protein sequence ID" value="AAM84386.1"/>
    <property type="molecule type" value="Genomic_DNA"/>
</dbReference>
<dbReference type="EMBL" id="AE017042">
    <property type="protein sequence ID" value="AAS60571.1"/>
    <property type="molecule type" value="Genomic_DNA"/>
</dbReference>
<dbReference type="PIR" id="AG0411">
    <property type="entry name" value="AG0411"/>
</dbReference>
<dbReference type="RefSeq" id="WP_002209362.1">
    <property type="nucleotide sequence ID" value="NZ_WUCM01000008.1"/>
</dbReference>
<dbReference type="RefSeq" id="YP_002348281.1">
    <property type="nucleotide sequence ID" value="NC_003143.1"/>
</dbReference>
<dbReference type="PDB" id="4E77">
    <property type="method" value="X-ray"/>
    <property type="resolution" value="2.00 A"/>
    <property type="chains" value="A=1-426"/>
</dbReference>
<dbReference type="PDBsum" id="4E77"/>
<dbReference type="SMR" id="Q8ZBL9"/>
<dbReference type="IntAct" id="Q8ZBL9">
    <property type="interactions" value="1"/>
</dbReference>
<dbReference type="STRING" id="214092.YPO3389"/>
<dbReference type="PaxDb" id="214092-YPO3389"/>
<dbReference type="DNASU" id="1145746"/>
<dbReference type="EnsemblBacteria" id="AAS60571">
    <property type="protein sequence ID" value="AAS60571"/>
    <property type="gene ID" value="YP_0296"/>
</dbReference>
<dbReference type="GeneID" id="57975320"/>
<dbReference type="KEGG" id="ype:YPO3389"/>
<dbReference type="KEGG" id="ypk:y0799"/>
<dbReference type="KEGG" id="ypm:YP_0296"/>
<dbReference type="PATRIC" id="fig|214092.21.peg.3871"/>
<dbReference type="eggNOG" id="COG0001">
    <property type="taxonomic scope" value="Bacteria"/>
</dbReference>
<dbReference type="HOGENOM" id="CLU_016922_1_5_6"/>
<dbReference type="OMA" id="WGPLIFG"/>
<dbReference type="OrthoDB" id="9801052at2"/>
<dbReference type="UniPathway" id="UPA00251">
    <property type="reaction ID" value="UER00317"/>
</dbReference>
<dbReference type="EvolutionaryTrace" id="Q8ZBL9"/>
<dbReference type="Proteomes" id="UP000000815">
    <property type="component" value="Chromosome"/>
</dbReference>
<dbReference type="Proteomes" id="UP000001019">
    <property type="component" value="Chromosome"/>
</dbReference>
<dbReference type="Proteomes" id="UP000002490">
    <property type="component" value="Chromosome"/>
</dbReference>
<dbReference type="GO" id="GO:0005737">
    <property type="term" value="C:cytoplasm"/>
    <property type="evidence" value="ECO:0007669"/>
    <property type="project" value="UniProtKB-SubCell"/>
</dbReference>
<dbReference type="GO" id="GO:0042286">
    <property type="term" value="F:glutamate-1-semialdehyde 2,1-aminomutase activity"/>
    <property type="evidence" value="ECO:0007669"/>
    <property type="project" value="UniProtKB-UniRule"/>
</dbReference>
<dbReference type="GO" id="GO:0030170">
    <property type="term" value="F:pyridoxal phosphate binding"/>
    <property type="evidence" value="ECO:0007669"/>
    <property type="project" value="InterPro"/>
</dbReference>
<dbReference type="GO" id="GO:0008483">
    <property type="term" value="F:transaminase activity"/>
    <property type="evidence" value="ECO:0007669"/>
    <property type="project" value="InterPro"/>
</dbReference>
<dbReference type="GO" id="GO:0006782">
    <property type="term" value="P:protoporphyrinogen IX biosynthetic process"/>
    <property type="evidence" value="ECO:0007669"/>
    <property type="project" value="UniProtKB-UniRule"/>
</dbReference>
<dbReference type="CDD" id="cd00610">
    <property type="entry name" value="OAT_like"/>
    <property type="match status" value="1"/>
</dbReference>
<dbReference type="FunFam" id="3.40.640.10:FF:000021">
    <property type="entry name" value="Glutamate-1-semialdehyde 2,1-aminomutase"/>
    <property type="match status" value="1"/>
</dbReference>
<dbReference type="FunFam" id="3.90.1150.10:FF:000012">
    <property type="entry name" value="Glutamate-1-semialdehyde 2,1-aminomutase"/>
    <property type="match status" value="1"/>
</dbReference>
<dbReference type="Gene3D" id="3.90.1150.10">
    <property type="entry name" value="Aspartate Aminotransferase, domain 1"/>
    <property type="match status" value="1"/>
</dbReference>
<dbReference type="Gene3D" id="3.40.640.10">
    <property type="entry name" value="Type I PLP-dependent aspartate aminotransferase-like (Major domain)"/>
    <property type="match status" value="1"/>
</dbReference>
<dbReference type="HAMAP" id="MF_00375">
    <property type="entry name" value="HemL_aminotrans_3"/>
    <property type="match status" value="1"/>
</dbReference>
<dbReference type="InterPro" id="IPR004639">
    <property type="entry name" value="4pyrrol_synth_GluAld_NH2Trfase"/>
</dbReference>
<dbReference type="InterPro" id="IPR005814">
    <property type="entry name" value="Aminotrans_3"/>
</dbReference>
<dbReference type="InterPro" id="IPR049704">
    <property type="entry name" value="Aminotrans_3_PPA_site"/>
</dbReference>
<dbReference type="InterPro" id="IPR015424">
    <property type="entry name" value="PyrdxlP-dep_Trfase"/>
</dbReference>
<dbReference type="InterPro" id="IPR015421">
    <property type="entry name" value="PyrdxlP-dep_Trfase_major"/>
</dbReference>
<dbReference type="InterPro" id="IPR015422">
    <property type="entry name" value="PyrdxlP-dep_Trfase_small"/>
</dbReference>
<dbReference type="NCBIfam" id="TIGR00713">
    <property type="entry name" value="hemL"/>
    <property type="match status" value="1"/>
</dbReference>
<dbReference type="NCBIfam" id="NF000818">
    <property type="entry name" value="PRK00062.1"/>
    <property type="match status" value="1"/>
</dbReference>
<dbReference type="PANTHER" id="PTHR43713">
    <property type="entry name" value="GLUTAMATE-1-SEMIALDEHYDE 2,1-AMINOMUTASE"/>
    <property type="match status" value="1"/>
</dbReference>
<dbReference type="PANTHER" id="PTHR43713:SF3">
    <property type="entry name" value="GLUTAMATE-1-SEMIALDEHYDE 2,1-AMINOMUTASE 1, CHLOROPLASTIC-RELATED"/>
    <property type="match status" value="1"/>
</dbReference>
<dbReference type="Pfam" id="PF00202">
    <property type="entry name" value="Aminotran_3"/>
    <property type="match status" value="1"/>
</dbReference>
<dbReference type="SUPFAM" id="SSF53383">
    <property type="entry name" value="PLP-dependent transferases"/>
    <property type="match status" value="1"/>
</dbReference>
<dbReference type="PROSITE" id="PS00600">
    <property type="entry name" value="AA_TRANSFER_CLASS_3"/>
    <property type="match status" value="1"/>
</dbReference>
<name>GSA_YERPE</name>
<gene>
    <name evidence="1" type="primary">hemL</name>
    <name type="ordered locus">YPO3389</name>
    <name type="ordered locus">y0799</name>
    <name type="ordered locus">YP_0296</name>
</gene>
<keyword id="KW-0002">3D-structure</keyword>
<keyword id="KW-0963">Cytoplasm</keyword>
<keyword id="KW-0413">Isomerase</keyword>
<keyword id="KW-0627">Porphyrin biosynthesis</keyword>
<keyword id="KW-0663">Pyridoxal phosphate</keyword>
<keyword id="KW-1185">Reference proteome</keyword>
<reference key="1">
    <citation type="journal article" date="2001" name="Nature">
        <title>Genome sequence of Yersinia pestis, the causative agent of plague.</title>
        <authorList>
            <person name="Parkhill J."/>
            <person name="Wren B.W."/>
            <person name="Thomson N.R."/>
            <person name="Titball R.W."/>
            <person name="Holden M.T.G."/>
            <person name="Prentice M.B."/>
            <person name="Sebaihia M."/>
            <person name="James K.D."/>
            <person name="Churcher C.M."/>
            <person name="Mungall K.L."/>
            <person name="Baker S."/>
            <person name="Basham D."/>
            <person name="Bentley S.D."/>
            <person name="Brooks K."/>
            <person name="Cerdeno-Tarraga A.-M."/>
            <person name="Chillingworth T."/>
            <person name="Cronin A."/>
            <person name="Davies R.M."/>
            <person name="Davis P."/>
            <person name="Dougan G."/>
            <person name="Feltwell T."/>
            <person name="Hamlin N."/>
            <person name="Holroyd S."/>
            <person name="Jagels K."/>
            <person name="Karlyshev A.V."/>
            <person name="Leather S."/>
            <person name="Moule S."/>
            <person name="Oyston P.C.F."/>
            <person name="Quail M.A."/>
            <person name="Rutherford K.M."/>
            <person name="Simmonds M."/>
            <person name="Skelton J."/>
            <person name="Stevens K."/>
            <person name="Whitehead S."/>
            <person name="Barrell B.G."/>
        </authorList>
    </citation>
    <scope>NUCLEOTIDE SEQUENCE [LARGE SCALE GENOMIC DNA]</scope>
    <source>
        <strain>CO-92 / Biovar Orientalis</strain>
    </source>
</reference>
<reference key="2">
    <citation type="journal article" date="2002" name="J. Bacteriol.">
        <title>Genome sequence of Yersinia pestis KIM.</title>
        <authorList>
            <person name="Deng W."/>
            <person name="Burland V."/>
            <person name="Plunkett G. III"/>
            <person name="Boutin A."/>
            <person name="Mayhew G.F."/>
            <person name="Liss P."/>
            <person name="Perna N.T."/>
            <person name="Rose D.J."/>
            <person name="Mau B."/>
            <person name="Zhou S."/>
            <person name="Schwartz D.C."/>
            <person name="Fetherston J.D."/>
            <person name="Lindler L.E."/>
            <person name="Brubaker R.R."/>
            <person name="Plano G.V."/>
            <person name="Straley S.C."/>
            <person name="McDonough K.A."/>
            <person name="Nilles M.L."/>
            <person name="Matson J.S."/>
            <person name="Blattner F.R."/>
            <person name="Perry R.D."/>
        </authorList>
    </citation>
    <scope>NUCLEOTIDE SEQUENCE [LARGE SCALE GENOMIC DNA]</scope>
    <source>
        <strain>KIM10+ / Biovar Mediaevalis</strain>
    </source>
</reference>
<reference key="3">
    <citation type="journal article" date="2004" name="DNA Res.">
        <title>Complete genome sequence of Yersinia pestis strain 91001, an isolate avirulent to humans.</title>
        <authorList>
            <person name="Song Y."/>
            <person name="Tong Z."/>
            <person name="Wang J."/>
            <person name="Wang L."/>
            <person name="Guo Z."/>
            <person name="Han Y."/>
            <person name="Zhang J."/>
            <person name="Pei D."/>
            <person name="Zhou D."/>
            <person name="Qin H."/>
            <person name="Pang X."/>
            <person name="Han Y."/>
            <person name="Zhai J."/>
            <person name="Li M."/>
            <person name="Cui B."/>
            <person name="Qi Z."/>
            <person name="Jin L."/>
            <person name="Dai R."/>
            <person name="Chen F."/>
            <person name="Li S."/>
            <person name="Ye C."/>
            <person name="Du Z."/>
            <person name="Lin W."/>
            <person name="Wang J."/>
            <person name="Yu J."/>
            <person name="Yang H."/>
            <person name="Wang J."/>
            <person name="Huang P."/>
            <person name="Yang R."/>
        </authorList>
    </citation>
    <scope>NUCLEOTIDE SEQUENCE [LARGE SCALE GENOMIC DNA]</scope>
    <source>
        <strain>91001 / Biovar Mediaevalis</strain>
    </source>
</reference>
<proteinExistence type="evidence at protein level"/>
<evidence type="ECO:0000255" key="1">
    <source>
        <dbReference type="HAMAP-Rule" id="MF_00375"/>
    </source>
</evidence>
<evidence type="ECO:0007829" key="2">
    <source>
        <dbReference type="PDB" id="4E77"/>
    </source>
</evidence>
<comment type="catalytic activity">
    <reaction evidence="1">
        <text>(S)-4-amino-5-oxopentanoate = 5-aminolevulinate</text>
        <dbReference type="Rhea" id="RHEA:14265"/>
        <dbReference type="ChEBI" id="CHEBI:57501"/>
        <dbReference type="ChEBI" id="CHEBI:356416"/>
        <dbReference type="EC" id="5.4.3.8"/>
    </reaction>
</comment>
<comment type="cofactor">
    <cofactor evidence="1">
        <name>pyridoxal 5'-phosphate</name>
        <dbReference type="ChEBI" id="CHEBI:597326"/>
    </cofactor>
</comment>
<comment type="pathway">
    <text evidence="1">Porphyrin-containing compound metabolism; protoporphyrin-IX biosynthesis; 5-aminolevulinate from L-glutamyl-tRNA(Glu): step 2/2.</text>
</comment>
<comment type="subunit">
    <text evidence="1">Homodimer.</text>
</comment>
<comment type="subcellular location">
    <subcellularLocation>
        <location evidence="1">Cytoplasm</location>
    </subcellularLocation>
</comment>
<comment type="similarity">
    <text evidence="1">Belongs to the class-III pyridoxal-phosphate-dependent aminotransferase family. HemL subfamily.</text>
</comment>
<sequence>MSKSENLYAQAQQLIPGGVNSPVRAFTGVGGIPLFIERADGAYLFDVDGKAYIDYVGSWGPMILGHNHPAIRQAVIEAVERGLSFGAPTEMEVKMAQLVTDLVPTMDMVRMVNSGTEATMSAIRLARGYTGRDKIIKFEGCYHGHADCLLVKAGSGALTLGQPNSPGVPTDFAKHTLTCTYNDLASVRQAFEQYPQEVACIIVEPVAGNMNCIPPLPEFLPGLRALCDEFGALLIIDEVMTGFRVALAGAQDYYHVIPDLTCLGKIIGGGMPVGAFGGRREVMNALAPTGPVYQAGTLSGNPIAMAAGFACLTEISQVGVYETLTELTDSLATGLRHAAKEENIPLVVNHVGGMFGLFFTNADTVTCYQDVMNCDVERFKRFFHLMLEEGVYLAPSAFEAGFMSLAHSNEDIQKTVNAARRCFAKL</sequence>
<organism>
    <name type="scientific">Yersinia pestis</name>
    <dbReference type="NCBI Taxonomy" id="632"/>
    <lineage>
        <taxon>Bacteria</taxon>
        <taxon>Pseudomonadati</taxon>
        <taxon>Pseudomonadota</taxon>
        <taxon>Gammaproteobacteria</taxon>
        <taxon>Enterobacterales</taxon>
        <taxon>Yersiniaceae</taxon>
        <taxon>Yersinia</taxon>
    </lineage>
</organism>
<protein>
    <recommendedName>
        <fullName evidence="1">Glutamate-1-semialdehyde 2,1-aminomutase</fullName>
        <shortName evidence="1">GSA</shortName>
        <ecNumber evidence="1">5.4.3.8</ecNumber>
    </recommendedName>
    <alternativeName>
        <fullName evidence="1">Glutamate-1-semialdehyde aminotransferase</fullName>
        <shortName evidence="1">GSA-AT</shortName>
    </alternativeName>
</protein>
<accession>Q8ZBL9</accession>
<accession>Q0WBQ7</accession>